<feature type="chain" id="PRO_0000313154" description="DNA ligase">
    <location>
        <begin position="1"/>
        <end position="719"/>
    </location>
</feature>
<feature type="domain" description="BRCT" evidence="1">
    <location>
        <begin position="640"/>
        <end position="719"/>
    </location>
</feature>
<feature type="active site" description="N6-AMP-lysine intermediate" evidence="1">
    <location>
        <position position="128"/>
    </location>
</feature>
<feature type="binding site" evidence="1">
    <location>
        <begin position="42"/>
        <end position="46"/>
    </location>
    <ligand>
        <name>NAD(+)</name>
        <dbReference type="ChEBI" id="CHEBI:57540"/>
    </ligand>
</feature>
<feature type="binding site" evidence="1">
    <location>
        <begin position="92"/>
        <end position="93"/>
    </location>
    <ligand>
        <name>NAD(+)</name>
        <dbReference type="ChEBI" id="CHEBI:57540"/>
    </ligand>
</feature>
<feature type="binding site" evidence="1">
    <location>
        <position position="126"/>
    </location>
    <ligand>
        <name>NAD(+)</name>
        <dbReference type="ChEBI" id="CHEBI:57540"/>
    </ligand>
</feature>
<feature type="binding site" evidence="1">
    <location>
        <position position="149"/>
    </location>
    <ligand>
        <name>NAD(+)</name>
        <dbReference type="ChEBI" id="CHEBI:57540"/>
    </ligand>
</feature>
<feature type="binding site" evidence="1">
    <location>
        <position position="185"/>
    </location>
    <ligand>
        <name>NAD(+)</name>
        <dbReference type="ChEBI" id="CHEBI:57540"/>
    </ligand>
</feature>
<feature type="binding site" evidence="1">
    <location>
        <position position="301"/>
    </location>
    <ligand>
        <name>NAD(+)</name>
        <dbReference type="ChEBI" id="CHEBI:57540"/>
    </ligand>
</feature>
<feature type="binding site" evidence="1">
    <location>
        <position position="325"/>
    </location>
    <ligand>
        <name>NAD(+)</name>
        <dbReference type="ChEBI" id="CHEBI:57540"/>
    </ligand>
</feature>
<feature type="binding site" evidence="1">
    <location>
        <position position="430"/>
    </location>
    <ligand>
        <name>Zn(2+)</name>
        <dbReference type="ChEBI" id="CHEBI:29105"/>
    </ligand>
</feature>
<feature type="binding site" evidence="1">
    <location>
        <position position="433"/>
    </location>
    <ligand>
        <name>Zn(2+)</name>
        <dbReference type="ChEBI" id="CHEBI:29105"/>
    </ligand>
</feature>
<feature type="binding site" evidence="1">
    <location>
        <position position="448"/>
    </location>
    <ligand>
        <name>Zn(2+)</name>
        <dbReference type="ChEBI" id="CHEBI:29105"/>
    </ligand>
</feature>
<feature type="binding site" evidence="1">
    <location>
        <position position="454"/>
    </location>
    <ligand>
        <name>Zn(2+)</name>
        <dbReference type="ChEBI" id="CHEBI:29105"/>
    </ligand>
</feature>
<name>DNLJ_BRUME</name>
<organism>
    <name type="scientific">Brucella melitensis biotype 1 (strain ATCC 23456 / CCUG 17765 / NCTC 10094 / 16M)</name>
    <dbReference type="NCBI Taxonomy" id="224914"/>
    <lineage>
        <taxon>Bacteria</taxon>
        <taxon>Pseudomonadati</taxon>
        <taxon>Pseudomonadota</taxon>
        <taxon>Alphaproteobacteria</taxon>
        <taxon>Hyphomicrobiales</taxon>
        <taxon>Brucellaceae</taxon>
        <taxon>Brucella/Ochrobactrum group</taxon>
        <taxon>Brucella</taxon>
    </lineage>
</organism>
<comment type="function">
    <text evidence="1">DNA ligase that catalyzes the formation of phosphodiester linkages between 5'-phosphoryl and 3'-hydroxyl groups in double-stranded DNA using NAD as a coenzyme and as the energy source for the reaction. It is essential for DNA replication and repair of damaged DNA.</text>
</comment>
<comment type="catalytic activity">
    <reaction evidence="1">
        <text>NAD(+) + (deoxyribonucleotide)n-3'-hydroxyl + 5'-phospho-(deoxyribonucleotide)m = (deoxyribonucleotide)n+m + AMP + beta-nicotinamide D-nucleotide.</text>
        <dbReference type="EC" id="6.5.1.2"/>
    </reaction>
</comment>
<comment type="cofactor">
    <cofactor evidence="1">
        <name>Mg(2+)</name>
        <dbReference type="ChEBI" id="CHEBI:18420"/>
    </cofactor>
    <cofactor evidence="1">
        <name>Mn(2+)</name>
        <dbReference type="ChEBI" id="CHEBI:29035"/>
    </cofactor>
</comment>
<comment type="similarity">
    <text evidence="1">Belongs to the NAD-dependent DNA ligase family. LigA subfamily.</text>
</comment>
<sequence>MSDISVEKLTELEAAAELERLARAIAHHDELYHAKDRPEISDAAYDALKRRNEAIEAHFPALVRDDSPSRRVGAAPALAIFAPVVHARPMLSLDNAFSDEDVRDFVGSVYRFLGQLPDDSIAFTAEPKIDGLSMSIRYENGILVSGATRGDGTTGENVTANIRTIAEIPNRLPAGAPAVVEVRGEVYMAKSDFLTLNAQMEAEGKQTYVNPRNTAAGSLRQLDAKVTASRKLRFFAYAWGEMSDMPADTQLGMVEVFRQWGFPVNPLMKRFNSVDGLLAHYRAIGMERPTLDYDIDGVVYKVDRLDLQTRLGFRSRSPRWAIAHKFPAEQALTILRGIDIQVGRTGALTPVARLEPITVGGVVVTNATLHNEDYIKGIGQKGEPIREGRDIRIGDSVIVQRAGDVIPQIVDVVLEEGKKRGEPYQFPHVCPACGSHAVREEGEAVRRCTGGLICPAQAVERIRHFVSRNAFDIEGLGEKQVEFFFNAEDPALCIRSPADIFTLKKRQENSLTKLQNIEGFGATSVKKLYDAIDARREIALHRFLFGLGIRHVGEVNAKRLARAYLSYAAFKKAALEAVPPKEGDRTDKGSEAWQDMLAVEGIGSIVAEAVVDFYGEPHNREVLAALLAEVTPLDEEARVATGSPVEGKTVVFTGSLERMSRDEAKAMAERHGAKTAGSVSKKTDLVVAGPGAGSKLAKATELGIEVINEDDWFKLVGED</sequence>
<accession>Q8YI56</accession>
<protein>
    <recommendedName>
        <fullName evidence="1">DNA ligase</fullName>
        <ecNumber evidence="1">6.5.1.2</ecNumber>
    </recommendedName>
    <alternativeName>
        <fullName evidence="1">Polydeoxyribonucleotide synthase [NAD(+)]</fullName>
    </alternativeName>
</protein>
<gene>
    <name evidence="1" type="primary">ligA</name>
    <name type="ordered locus">BMEI0589</name>
</gene>
<evidence type="ECO:0000255" key="1">
    <source>
        <dbReference type="HAMAP-Rule" id="MF_01588"/>
    </source>
</evidence>
<reference key="1">
    <citation type="journal article" date="2002" name="Proc. Natl. Acad. Sci. U.S.A.">
        <title>The genome sequence of the facultative intracellular pathogen Brucella melitensis.</title>
        <authorList>
            <person name="DelVecchio V.G."/>
            <person name="Kapatral V."/>
            <person name="Redkar R.J."/>
            <person name="Patra G."/>
            <person name="Mujer C."/>
            <person name="Los T."/>
            <person name="Ivanova N."/>
            <person name="Anderson I."/>
            <person name="Bhattacharyya A."/>
            <person name="Lykidis A."/>
            <person name="Reznik G."/>
            <person name="Jablonski L."/>
            <person name="Larsen N."/>
            <person name="D'Souza M."/>
            <person name="Bernal A."/>
            <person name="Mazur M."/>
            <person name="Goltsman E."/>
            <person name="Selkov E."/>
            <person name="Elzer P.H."/>
            <person name="Hagius S."/>
            <person name="O'Callaghan D."/>
            <person name="Letesson J.-J."/>
            <person name="Haselkorn R."/>
            <person name="Kyrpides N.C."/>
            <person name="Overbeek R."/>
        </authorList>
    </citation>
    <scope>NUCLEOTIDE SEQUENCE [LARGE SCALE GENOMIC DNA]</scope>
    <source>
        <strain>ATCC 23456 / CCUG 17765 / NCTC 10094 / 16M</strain>
    </source>
</reference>
<dbReference type="EC" id="6.5.1.2" evidence="1"/>
<dbReference type="EMBL" id="AE008917">
    <property type="protein sequence ID" value="AAL51770.1"/>
    <property type="molecule type" value="Genomic_DNA"/>
</dbReference>
<dbReference type="PIR" id="AG3325">
    <property type="entry name" value="AG3325"/>
</dbReference>
<dbReference type="RefSeq" id="WP_004684014.1">
    <property type="nucleotide sequence ID" value="NZ_GG703780.1"/>
</dbReference>
<dbReference type="SMR" id="Q8YI56"/>
<dbReference type="GeneID" id="29593374"/>
<dbReference type="KEGG" id="bme:BMEI0589"/>
<dbReference type="KEGG" id="bmel:DK63_837"/>
<dbReference type="PATRIC" id="fig|224914.52.peg.879"/>
<dbReference type="eggNOG" id="COG0272">
    <property type="taxonomic scope" value="Bacteria"/>
</dbReference>
<dbReference type="PhylomeDB" id="Q8YI56"/>
<dbReference type="Proteomes" id="UP000000419">
    <property type="component" value="Chromosome I"/>
</dbReference>
<dbReference type="GO" id="GO:0005829">
    <property type="term" value="C:cytosol"/>
    <property type="evidence" value="ECO:0007669"/>
    <property type="project" value="TreeGrafter"/>
</dbReference>
<dbReference type="GO" id="GO:0003911">
    <property type="term" value="F:DNA ligase (NAD+) activity"/>
    <property type="evidence" value="ECO:0007669"/>
    <property type="project" value="UniProtKB-UniRule"/>
</dbReference>
<dbReference type="GO" id="GO:0046872">
    <property type="term" value="F:metal ion binding"/>
    <property type="evidence" value="ECO:0007669"/>
    <property type="project" value="UniProtKB-KW"/>
</dbReference>
<dbReference type="GO" id="GO:0006281">
    <property type="term" value="P:DNA repair"/>
    <property type="evidence" value="ECO:0007669"/>
    <property type="project" value="UniProtKB-KW"/>
</dbReference>
<dbReference type="GO" id="GO:0006260">
    <property type="term" value="P:DNA replication"/>
    <property type="evidence" value="ECO:0007669"/>
    <property type="project" value="UniProtKB-KW"/>
</dbReference>
<dbReference type="CDD" id="cd17748">
    <property type="entry name" value="BRCT_DNA_ligase_like"/>
    <property type="match status" value="1"/>
</dbReference>
<dbReference type="CDD" id="cd00114">
    <property type="entry name" value="LIGANc"/>
    <property type="match status" value="1"/>
</dbReference>
<dbReference type="FunFam" id="3.30.470.30:FF:000001">
    <property type="entry name" value="DNA ligase"/>
    <property type="match status" value="1"/>
</dbReference>
<dbReference type="Gene3D" id="6.20.10.30">
    <property type="match status" value="1"/>
</dbReference>
<dbReference type="Gene3D" id="1.10.150.20">
    <property type="entry name" value="5' to 3' exonuclease, C-terminal subdomain"/>
    <property type="match status" value="2"/>
</dbReference>
<dbReference type="Gene3D" id="3.40.50.10190">
    <property type="entry name" value="BRCT domain"/>
    <property type="match status" value="1"/>
</dbReference>
<dbReference type="Gene3D" id="3.30.470.30">
    <property type="entry name" value="DNA ligase/mRNA capping enzyme"/>
    <property type="match status" value="1"/>
</dbReference>
<dbReference type="Gene3D" id="1.10.287.610">
    <property type="entry name" value="Helix hairpin bin"/>
    <property type="match status" value="1"/>
</dbReference>
<dbReference type="Gene3D" id="2.40.50.140">
    <property type="entry name" value="Nucleic acid-binding proteins"/>
    <property type="match status" value="1"/>
</dbReference>
<dbReference type="HAMAP" id="MF_01588">
    <property type="entry name" value="DNA_ligase_A"/>
    <property type="match status" value="1"/>
</dbReference>
<dbReference type="InterPro" id="IPR001357">
    <property type="entry name" value="BRCT_dom"/>
</dbReference>
<dbReference type="InterPro" id="IPR036420">
    <property type="entry name" value="BRCT_dom_sf"/>
</dbReference>
<dbReference type="InterPro" id="IPR041663">
    <property type="entry name" value="DisA/LigA_HHH"/>
</dbReference>
<dbReference type="InterPro" id="IPR001679">
    <property type="entry name" value="DNA_ligase"/>
</dbReference>
<dbReference type="InterPro" id="IPR018239">
    <property type="entry name" value="DNA_ligase_AS"/>
</dbReference>
<dbReference type="InterPro" id="IPR033136">
    <property type="entry name" value="DNA_ligase_CS"/>
</dbReference>
<dbReference type="InterPro" id="IPR013839">
    <property type="entry name" value="DNAligase_adenylation"/>
</dbReference>
<dbReference type="InterPro" id="IPR013840">
    <property type="entry name" value="DNAligase_N"/>
</dbReference>
<dbReference type="InterPro" id="IPR012340">
    <property type="entry name" value="NA-bd_OB-fold"/>
</dbReference>
<dbReference type="InterPro" id="IPR004150">
    <property type="entry name" value="NAD_DNA_ligase_OB"/>
</dbReference>
<dbReference type="InterPro" id="IPR010994">
    <property type="entry name" value="RuvA_2-like"/>
</dbReference>
<dbReference type="InterPro" id="IPR004149">
    <property type="entry name" value="Znf_DNAligase_C4"/>
</dbReference>
<dbReference type="NCBIfam" id="TIGR00575">
    <property type="entry name" value="dnlj"/>
    <property type="match status" value="1"/>
</dbReference>
<dbReference type="NCBIfam" id="NF005932">
    <property type="entry name" value="PRK07956.1"/>
    <property type="match status" value="1"/>
</dbReference>
<dbReference type="PANTHER" id="PTHR23389">
    <property type="entry name" value="CHROMOSOME TRANSMISSION FIDELITY FACTOR 18"/>
    <property type="match status" value="1"/>
</dbReference>
<dbReference type="PANTHER" id="PTHR23389:SF9">
    <property type="entry name" value="DNA LIGASE"/>
    <property type="match status" value="1"/>
</dbReference>
<dbReference type="Pfam" id="PF00533">
    <property type="entry name" value="BRCT"/>
    <property type="match status" value="1"/>
</dbReference>
<dbReference type="Pfam" id="PF01653">
    <property type="entry name" value="DNA_ligase_aden"/>
    <property type="match status" value="1"/>
</dbReference>
<dbReference type="Pfam" id="PF03120">
    <property type="entry name" value="DNA_ligase_OB"/>
    <property type="match status" value="1"/>
</dbReference>
<dbReference type="Pfam" id="PF03119">
    <property type="entry name" value="DNA_ligase_ZBD"/>
    <property type="match status" value="1"/>
</dbReference>
<dbReference type="Pfam" id="PF12826">
    <property type="entry name" value="HHH_2"/>
    <property type="match status" value="1"/>
</dbReference>
<dbReference type="PIRSF" id="PIRSF001604">
    <property type="entry name" value="LigA"/>
    <property type="match status" value="1"/>
</dbReference>
<dbReference type="SMART" id="SM00292">
    <property type="entry name" value="BRCT"/>
    <property type="match status" value="1"/>
</dbReference>
<dbReference type="SMART" id="SM00532">
    <property type="entry name" value="LIGANc"/>
    <property type="match status" value="1"/>
</dbReference>
<dbReference type="SUPFAM" id="SSF52113">
    <property type="entry name" value="BRCT domain"/>
    <property type="match status" value="1"/>
</dbReference>
<dbReference type="SUPFAM" id="SSF56091">
    <property type="entry name" value="DNA ligase/mRNA capping enzyme, catalytic domain"/>
    <property type="match status" value="1"/>
</dbReference>
<dbReference type="SUPFAM" id="SSF50249">
    <property type="entry name" value="Nucleic acid-binding proteins"/>
    <property type="match status" value="1"/>
</dbReference>
<dbReference type="SUPFAM" id="SSF47781">
    <property type="entry name" value="RuvA domain 2-like"/>
    <property type="match status" value="1"/>
</dbReference>
<dbReference type="PROSITE" id="PS50172">
    <property type="entry name" value="BRCT"/>
    <property type="match status" value="1"/>
</dbReference>
<dbReference type="PROSITE" id="PS01055">
    <property type="entry name" value="DNA_LIGASE_N1"/>
    <property type="match status" value="1"/>
</dbReference>
<dbReference type="PROSITE" id="PS01056">
    <property type="entry name" value="DNA_LIGASE_N2"/>
    <property type="match status" value="1"/>
</dbReference>
<keyword id="KW-0227">DNA damage</keyword>
<keyword id="KW-0234">DNA repair</keyword>
<keyword id="KW-0235">DNA replication</keyword>
<keyword id="KW-0436">Ligase</keyword>
<keyword id="KW-0460">Magnesium</keyword>
<keyword id="KW-0464">Manganese</keyword>
<keyword id="KW-0479">Metal-binding</keyword>
<keyword id="KW-0520">NAD</keyword>
<keyword id="KW-0862">Zinc</keyword>
<proteinExistence type="inferred from homology"/>